<proteinExistence type="evidence at protein level"/>
<accession>P0AES0</accession>
<accession>P43675</accession>
<accession>Q2M9K7</accession>
<sequence>MSKGTTSQDAPFGTLLGYAPGGVAIYSSDYSSLDPQEYEDDAVFRSYIDDEYMGHKWQCVEFARRFLFLNYGVVFTDVGMAWEIFSLRFLREVVNDNILPLQAFPNGSPRAPVAGALLIWDKGGEFKDTGHVAIITQLHGNKVRIAEQNVIHSPLPQGQQWTRELEMVVENGCYTLKDTFDDTTILGWMIQTEDTEYSLPQPEIAGELLKISGARLENKGQFDGKWLDEKDPLQNAYVQANGQVINQDPYHYYTITESAEQELIKATNELHLMYLHATDKVLKDDNLLALFDIPKILWPRLRLSWQRRRHHMITGRMDFCMDERGLKVYEYNADSASCHTEAGLILERWAEQGYKGNGFNPAEGLINELAGAWKHSRARPFVHIMQDKDIEENYHAQFMEQALHQAGFETRILRGLDELGWDAAGQLIDGEGRLVNCVWKTWAWETAFDQIREVSDREFAAVPIRTGHPQNEVRLIDVLLRPEVLVFEPLWTVIPGNKAILPILWSLFPHHRYLLDTDFTVNDELVKTGYAVKPIAGRCGSNIDLVSHHEEVLDKTSGKFAEQKNIYQQLWCLPKVDGKYIQVCTFTVGGNYGGTCLRGDESLVIKKESDIEPLIVVKK</sequence>
<protein>
    <recommendedName>
        <fullName>Bifunctional glutathionylspermidine synthetase/amidase</fullName>
        <shortName>GspSA</shortName>
    </recommendedName>
    <domain>
        <recommendedName>
            <fullName>Glutathionylspermidine amidase</fullName>
            <shortName>Gsp amidase</shortName>
            <ecNumber evidence="3 4 5 6">3.5.1.78</ecNumber>
        </recommendedName>
        <alternativeName>
            <fullName>Glutathionylspermidine amidohydrolase [spermidine-forming]</fullName>
        </alternativeName>
    </domain>
    <domain>
        <recommendedName>
            <fullName>Glutathionylspermidine synthetase</fullName>
            <shortName>Gsp synthetase</shortName>
            <ecNumber evidence="3 4 5 6">6.3.1.8</ecNumber>
        </recommendedName>
        <alternativeName>
            <fullName>Glutathione:spermidine ligase [ADP-forming]</fullName>
        </alternativeName>
        <alternativeName>
            <fullName>Gsp synthase</fullName>
        </alternativeName>
    </domain>
</protein>
<name>GSP_ECOLI</name>
<reference key="1">
    <citation type="journal article" date="1995" name="J. Biol. Chem.">
        <title>Glutathionylspermidine metabolism in Escherichia coli. Purification, cloning, overproduction, and characterization of a bifunctional glutathionylspermidine synthetase/amidase.</title>
        <authorList>
            <person name="Bollinger J.M. Jr."/>
            <person name="Kwon D.S."/>
            <person name="Huisman G.W."/>
            <person name="Kolter R."/>
            <person name="Walsh C.T."/>
        </authorList>
    </citation>
    <scope>NUCLEOTIDE SEQUENCE [GENOMIC DNA]</scope>
    <scope>PROTEIN SEQUENCE OF 2-7</scope>
    <scope>FUNCTION</scope>
    <scope>CATALYTIC ACTIVITY</scope>
    <scope>BIOPHYSICOCHEMICAL PROPERTIES</scope>
    <scope>SUBUNIT</scope>
    <source>
        <strain>B</strain>
        <strain>K12</strain>
    </source>
</reference>
<reference key="2">
    <citation type="journal article" date="1997" name="Science">
        <title>The complete genome sequence of Escherichia coli K-12.</title>
        <authorList>
            <person name="Blattner F.R."/>
            <person name="Plunkett G. III"/>
            <person name="Bloch C.A."/>
            <person name="Perna N.T."/>
            <person name="Burland V."/>
            <person name="Riley M."/>
            <person name="Collado-Vides J."/>
            <person name="Glasner J.D."/>
            <person name="Rode C.K."/>
            <person name="Mayhew G.F."/>
            <person name="Gregor J."/>
            <person name="Davis N.W."/>
            <person name="Kirkpatrick H.A."/>
            <person name="Goeden M.A."/>
            <person name="Rose D.J."/>
            <person name="Mau B."/>
            <person name="Shao Y."/>
        </authorList>
    </citation>
    <scope>NUCLEOTIDE SEQUENCE [LARGE SCALE GENOMIC DNA]</scope>
    <source>
        <strain>K12 / MG1655 / ATCC 47076</strain>
    </source>
</reference>
<reference key="3">
    <citation type="journal article" date="2006" name="Mol. Syst. Biol.">
        <title>Highly accurate genome sequences of Escherichia coli K-12 strains MG1655 and W3110.</title>
        <authorList>
            <person name="Hayashi K."/>
            <person name="Morooka N."/>
            <person name="Yamamoto Y."/>
            <person name="Fujita K."/>
            <person name="Isono K."/>
            <person name="Choi S."/>
            <person name="Ohtsubo E."/>
            <person name="Baba T."/>
            <person name="Wanner B.L."/>
            <person name="Mori H."/>
            <person name="Horiuchi T."/>
        </authorList>
    </citation>
    <scope>NUCLEOTIDE SEQUENCE [LARGE SCALE GENOMIC DNA]</scope>
    <source>
        <strain>K12 / W3110 / ATCC 27325 / DSM 5911</strain>
    </source>
</reference>
<reference key="4">
    <citation type="journal article" date="1997" name="Biochemistry">
        <title>Evidence for a glutathionyl-enzyme intermediate in the amidase activity of the bifunctional glutathionylspermidine synthetase/amidase from Escherichia coli.</title>
        <authorList>
            <person name="Lin C.H."/>
            <person name="Kwon D.S."/>
            <person name="Bollinger J.M. Jr."/>
            <person name="Walsh C.T."/>
        </authorList>
    </citation>
    <scope>REACTION MECHANISM OF AMIDASE ACTIVITY</scope>
    <scope>ACTIVE SITE AT CYS-59</scope>
    <scope>ACTIVITY REGULATION</scope>
    <scope>MUTAGENESIS OF CYS-59 AND CYS-173</scope>
</reference>
<reference key="5">
    <citation type="journal article" date="1997" name="J. Biol. Chem.">
        <title>Dissection of glutathionylspermidine synthetase/amidase from Escherichia coli into autonomously folding and functional synthetase and amidase domains.</title>
        <authorList>
            <person name="Kwon D.S."/>
            <person name="Lin C.H."/>
            <person name="Chen S."/>
            <person name="Coward J.K."/>
            <person name="Walsh C.T."/>
            <person name="Bollinger J.M. Jr."/>
        </authorList>
    </citation>
    <scope>FUNCTION</scope>
    <scope>CATALYTIC ACTIVITY</scope>
    <scope>DOMAIN</scope>
    <scope>SUBSTRATE SPECIFICITY</scope>
    <scope>ACTIVITY REGULATION</scope>
</reference>
<reference key="6">
    <citation type="journal article" date="2012" name="Int. J. Biochem. Mol. Biol.">
        <title>Comparison of the functions of glutathionylspermidine synthetase/amidase from E. coli and its predicted homologues YgiC and YjfC.</title>
        <authorList>
            <person name="Sui L."/>
            <person name="Warren J.C."/>
            <person name="Russell J.P."/>
            <person name="Stourman N.V."/>
        </authorList>
    </citation>
    <scope>FUNCTION</scope>
    <scope>CATALYTIC ACTIVITY</scope>
    <scope>DISRUPTION PHENOTYPE</scope>
    <source>
        <strain>K12</strain>
    </source>
</reference>
<reference key="7">
    <citation type="journal article" date="2006" name="EMBO J.">
        <title>Dual binding sites for translocation catalysis by Escherichia coli glutathionylspermidine synthetase.</title>
        <authorList>
            <person name="Pai C.H."/>
            <person name="Chiang B.Y."/>
            <person name="Ko T.P."/>
            <person name="Chou C.C."/>
            <person name="Chong C.M."/>
            <person name="Yen F.J."/>
            <person name="Chen S."/>
            <person name="Coward J.K."/>
            <person name="Wang A.H."/>
            <person name="Lin C.H."/>
        </authorList>
    </citation>
    <scope>X-RAY CRYSTALLOGRAPHY (2.10 ANGSTROMS) OF APOENZYME AND IN COMPLEXES WITH SUBSTRATE; PRODUCT AND INHIBITOR</scope>
    <scope>DOMAIN BOUNDARIES</scope>
    <scope>SUBUNIT</scope>
    <scope>REACTION MECHANISM OF SYNTHETASE ACTIVITY</scope>
    <scope>KINETIC PARAMETERS</scope>
    <scope>SITE AT ARG-316</scope>
    <scope>MUTAGENESIS OF SER-335; SER-337; CYS-338; GLU-391; GLU-392; THR-441; ARG-538 AND ARG-598</scope>
</reference>
<reference key="8">
    <citation type="journal article" date="2010" name="J. Biol. Chem.">
        <title>Protein S-thiolation by glutathionylspermidine (Gsp): the role of Escherichia coli Gsp synthetase/amidase in redox regulation.</title>
        <authorList>
            <person name="Chiang B.Y."/>
            <person name="Chen T.C."/>
            <person name="Pai C.H."/>
            <person name="Chou C.C."/>
            <person name="Chen H.H."/>
            <person name="Ko T.P."/>
            <person name="Hsu W.H."/>
            <person name="Chang C.Y."/>
            <person name="Wu W.F."/>
            <person name="Wang A.H."/>
            <person name="Lin C.H."/>
        </authorList>
    </citation>
    <scope>X-RAY CRYSTALLOGRAPHY (1.50 ANGSTROMS) OF 1-197</scope>
    <scope>FUNCTION</scope>
    <scope>ROLE IN REDOX REGULATION</scope>
    <scope>CATALYTIC ACTIVITY</scope>
    <scope>ACTIVITY REGULATION</scope>
    <scope>OXIDATION AT CYS-59</scope>
    <scope>DISRUPTION PHENOTYPE</scope>
</reference>
<reference key="9">
    <citation type="journal article" date="2011" name="Protein Sci.">
        <title>Structure and mechanism of Escherichia coli glutathionylspermidine amidase belonging to the family of cysteine; histidine-dependent amidohydrolases/peptidases.</title>
        <authorList>
            <person name="Pai C.H."/>
            <person name="Wu H.J."/>
            <person name="Lin C.H."/>
            <person name="Wang A.H."/>
        </authorList>
    </citation>
    <scope>X-RAY CRYSTALLOGRAPHY (1.95 ANGSTROMS) OF MUTANT ALA-59 IN COMPLEXES WITH ADP; GLUTATHIONYLSPERMIDINE AND MAGNESIUM</scope>
    <scope>ACTIVE SITES</scope>
    <scope>CATALYTIC MECHANISM OF AMIDASE ACTIVITY</scope>
</reference>
<dbReference type="EC" id="3.5.1.78" evidence="3 4 5 6"/>
<dbReference type="EC" id="6.3.1.8" evidence="3 4 5 6"/>
<dbReference type="EMBL" id="U23148">
    <property type="protein sequence ID" value="AAC43339.1"/>
    <property type="molecule type" value="Genomic_DNA"/>
</dbReference>
<dbReference type="EMBL" id="U28377">
    <property type="protein sequence ID" value="AAA69155.1"/>
    <property type="molecule type" value="Genomic_DNA"/>
</dbReference>
<dbReference type="EMBL" id="U00096">
    <property type="protein sequence ID" value="AAC76024.1"/>
    <property type="molecule type" value="Genomic_DNA"/>
</dbReference>
<dbReference type="EMBL" id="AP009048">
    <property type="protein sequence ID" value="BAE77049.1"/>
    <property type="molecule type" value="Genomic_DNA"/>
</dbReference>
<dbReference type="PIR" id="A57538">
    <property type="entry name" value="A57538"/>
</dbReference>
<dbReference type="RefSeq" id="NP_417462.1">
    <property type="nucleotide sequence ID" value="NC_000913.3"/>
</dbReference>
<dbReference type="RefSeq" id="WP_001297309.1">
    <property type="nucleotide sequence ID" value="NZ_SSZK01000023.1"/>
</dbReference>
<dbReference type="PDB" id="2IO7">
    <property type="method" value="X-ray"/>
    <property type="resolution" value="2.70 A"/>
    <property type="chains" value="A/B=1-619"/>
</dbReference>
<dbReference type="PDB" id="2IO8">
    <property type="method" value="X-ray"/>
    <property type="resolution" value="2.10 A"/>
    <property type="chains" value="A/B=1-619"/>
</dbReference>
<dbReference type="PDB" id="2IO9">
    <property type="method" value="X-ray"/>
    <property type="resolution" value="2.20 A"/>
    <property type="chains" value="A/B=1-619"/>
</dbReference>
<dbReference type="PDB" id="2IOA">
    <property type="method" value="X-ray"/>
    <property type="resolution" value="2.80 A"/>
    <property type="chains" value="A/B=1-619"/>
</dbReference>
<dbReference type="PDB" id="2IOB">
    <property type="method" value="X-ray"/>
    <property type="resolution" value="2.20 A"/>
    <property type="chains" value="A/B=1-619"/>
</dbReference>
<dbReference type="PDB" id="3A2Y">
    <property type="method" value="X-ray"/>
    <property type="resolution" value="1.95 A"/>
    <property type="chains" value="A=1-197"/>
</dbReference>
<dbReference type="PDB" id="3A2Z">
    <property type="method" value="X-ray"/>
    <property type="resolution" value="1.50 A"/>
    <property type="chains" value="A=1-197"/>
</dbReference>
<dbReference type="PDB" id="3A30">
    <property type="method" value="X-ray"/>
    <property type="resolution" value="2.20 A"/>
    <property type="chains" value="A=1-197"/>
</dbReference>
<dbReference type="PDB" id="3O98">
    <property type="method" value="X-ray"/>
    <property type="resolution" value="2.80 A"/>
    <property type="chains" value="A/B=1-619"/>
</dbReference>
<dbReference type="PDBsum" id="2IO7"/>
<dbReference type="PDBsum" id="2IO8"/>
<dbReference type="PDBsum" id="2IO9"/>
<dbReference type="PDBsum" id="2IOA"/>
<dbReference type="PDBsum" id="2IOB"/>
<dbReference type="PDBsum" id="3A2Y"/>
<dbReference type="PDBsum" id="3A2Z"/>
<dbReference type="PDBsum" id="3A30"/>
<dbReference type="PDBsum" id="3O98"/>
<dbReference type="SMR" id="P0AES0"/>
<dbReference type="BioGRID" id="4261180">
    <property type="interactions" value="30"/>
</dbReference>
<dbReference type="BioGRID" id="851792">
    <property type="interactions" value="4"/>
</dbReference>
<dbReference type="DIP" id="DIP-36018N"/>
<dbReference type="FunCoup" id="P0AES0">
    <property type="interactions" value="46"/>
</dbReference>
<dbReference type="IntAct" id="P0AES0">
    <property type="interactions" value="14"/>
</dbReference>
<dbReference type="STRING" id="511145.b2988"/>
<dbReference type="MEROPS" id="C51.A01"/>
<dbReference type="jPOST" id="P0AES0"/>
<dbReference type="PaxDb" id="511145-b2988"/>
<dbReference type="EnsemblBacteria" id="AAC76024">
    <property type="protein sequence ID" value="AAC76024"/>
    <property type="gene ID" value="b2988"/>
</dbReference>
<dbReference type="GeneID" id="93778997"/>
<dbReference type="GeneID" id="947474"/>
<dbReference type="KEGG" id="ecj:JW2956"/>
<dbReference type="KEGG" id="eco:b2988"/>
<dbReference type="KEGG" id="ecoc:C3026_16345"/>
<dbReference type="PATRIC" id="fig|1411691.4.peg.3741"/>
<dbReference type="EchoBASE" id="EB2720"/>
<dbReference type="eggNOG" id="COG0754">
    <property type="taxonomic scope" value="Bacteria"/>
</dbReference>
<dbReference type="HOGENOM" id="CLU_478805_0_0_6"/>
<dbReference type="InParanoid" id="P0AES0"/>
<dbReference type="OMA" id="WPRIRHS"/>
<dbReference type="OrthoDB" id="9765517at2"/>
<dbReference type="PhylomeDB" id="P0AES0"/>
<dbReference type="BioCyc" id="EcoCyc:GSP-MONOMER"/>
<dbReference type="BioCyc" id="MetaCyc:GSP-MONOMER"/>
<dbReference type="BRENDA" id="3.5.1.78">
    <property type="organism ID" value="2026"/>
</dbReference>
<dbReference type="BRENDA" id="6.3.1.8">
    <property type="organism ID" value="2026"/>
</dbReference>
<dbReference type="UniPathway" id="UPA00204"/>
<dbReference type="UniPathway" id="UPA00819"/>
<dbReference type="EvolutionaryTrace" id="P0AES0"/>
<dbReference type="PRO" id="PR:P0AES0"/>
<dbReference type="Proteomes" id="UP000000625">
    <property type="component" value="Chromosome"/>
</dbReference>
<dbReference type="GO" id="GO:0005829">
    <property type="term" value="C:cytosol"/>
    <property type="evidence" value="ECO:0000314"/>
    <property type="project" value="EcoCyc"/>
</dbReference>
<dbReference type="GO" id="GO:0005524">
    <property type="term" value="F:ATP binding"/>
    <property type="evidence" value="ECO:0007669"/>
    <property type="project" value="UniProtKB-KW"/>
</dbReference>
<dbReference type="GO" id="GO:0008884">
    <property type="term" value="F:glutathionylspermidine amidase activity"/>
    <property type="evidence" value="ECO:0000314"/>
    <property type="project" value="EcoCyc"/>
</dbReference>
<dbReference type="GO" id="GO:0008885">
    <property type="term" value="F:glutathionylspermidine synthase activity"/>
    <property type="evidence" value="ECO:0000314"/>
    <property type="project" value="EcoCyc"/>
</dbReference>
<dbReference type="GO" id="GO:0046872">
    <property type="term" value="F:metal ion binding"/>
    <property type="evidence" value="ECO:0007669"/>
    <property type="project" value="UniProtKB-KW"/>
</dbReference>
<dbReference type="GO" id="GO:0006749">
    <property type="term" value="P:glutathione metabolic process"/>
    <property type="evidence" value="ECO:0007669"/>
    <property type="project" value="UniProtKB-UniPathway"/>
</dbReference>
<dbReference type="GO" id="GO:0008216">
    <property type="term" value="P:spermidine metabolic process"/>
    <property type="evidence" value="ECO:0007669"/>
    <property type="project" value="UniProtKB-UniPathway"/>
</dbReference>
<dbReference type="FunFam" id="3.30.1490.330:FF:000001">
    <property type="entry name" value="Bifunctional glutathionylspermidine synthetase/amidase"/>
    <property type="match status" value="1"/>
</dbReference>
<dbReference type="FunFam" id="3.90.1720.10:FF:000004">
    <property type="entry name" value="Bifunctional glutathionylspermidine synthetase/amidase"/>
    <property type="match status" value="1"/>
</dbReference>
<dbReference type="Gene3D" id="3.30.1490.330">
    <property type="match status" value="1"/>
</dbReference>
<dbReference type="Gene3D" id="3.90.1720.10">
    <property type="entry name" value="endopeptidase domain like (from Nostoc punctiforme)"/>
    <property type="match status" value="1"/>
</dbReference>
<dbReference type="InterPro" id="IPR007921">
    <property type="entry name" value="CHAP_dom"/>
</dbReference>
<dbReference type="InterPro" id="IPR051705">
    <property type="entry name" value="Gsp_Synthetase/Amidase"/>
</dbReference>
<dbReference type="InterPro" id="IPR005494">
    <property type="entry name" value="GSPS_pre-ATP-grasp-like_dom"/>
</dbReference>
<dbReference type="InterPro" id="IPR038765">
    <property type="entry name" value="Papain-like_cys_pep_sf"/>
</dbReference>
<dbReference type="InterPro" id="IPR016185">
    <property type="entry name" value="PreATP-grasp_dom_sf"/>
</dbReference>
<dbReference type="NCBIfam" id="NF007801">
    <property type="entry name" value="PRK10507.1"/>
    <property type="match status" value="1"/>
</dbReference>
<dbReference type="PANTHER" id="PTHR30094">
    <property type="entry name" value="BIFUNCTIONAL GLUTATHIONYLSPERMIDINE SYNTHETASE/AMIDASE-RELATED"/>
    <property type="match status" value="1"/>
</dbReference>
<dbReference type="PANTHER" id="PTHR30094:SF0">
    <property type="entry name" value="BIFUNCTIONAL GLUTATHIONYLSPERMIDINE SYNTHETASE_AMIDASE-RELATED"/>
    <property type="match status" value="1"/>
</dbReference>
<dbReference type="Pfam" id="PF05257">
    <property type="entry name" value="CHAP"/>
    <property type="match status" value="1"/>
</dbReference>
<dbReference type="Pfam" id="PF03738">
    <property type="entry name" value="GSP_synth"/>
    <property type="match status" value="1"/>
</dbReference>
<dbReference type="SUPFAM" id="SSF54001">
    <property type="entry name" value="Cysteine proteinases"/>
    <property type="match status" value="1"/>
</dbReference>
<dbReference type="SUPFAM" id="SSF56059">
    <property type="entry name" value="Glutathione synthetase ATP-binding domain-like"/>
    <property type="match status" value="1"/>
</dbReference>
<dbReference type="SUPFAM" id="SSF52440">
    <property type="entry name" value="PreATP-grasp domain"/>
    <property type="match status" value="1"/>
</dbReference>
<dbReference type="PROSITE" id="PS50911">
    <property type="entry name" value="CHAP"/>
    <property type="match status" value="1"/>
</dbReference>
<comment type="function">
    <text evidence="3 4 5 6">Catalyzes the formation of an amide bond between glutathione (GSH) and spermidine coupled with hydrolysis of ATP; also catalyzes the opposing reaction, i.e. the hydrolysis of glutathionylspermidine (Gsp) back to glutathione and spermidine. The amidase active site can also hydrolyze Gsp-disulfide (Gsp-S-S-Gsp) to Gsp-SG and Gsp S-thiolated proteins (GspSSPs) to GSH S-thiolated protein (GSSPs). Likely acts synergistically with glutaredoxin to regulate the redox environment of E.coli and defend against oxidative damage. In vitro, the amidase active site also catalyzes hydrolysis of amide and ester derivatives of glutathione (e.g. glutathione ethyl ester and glutathione amide) but lacks activity toward acetylspermidine (N1 and N8) and acetylspermine (N1).</text>
</comment>
<comment type="catalytic activity">
    <reaction evidence="3 4 5 6">
        <text>spermidine + glutathione + ATP = glutathionylspermidine + ADP + phosphate + H(+)</text>
        <dbReference type="Rhea" id="RHEA:21272"/>
        <dbReference type="ChEBI" id="CHEBI:15378"/>
        <dbReference type="ChEBI" id="CHEBI:30616"/>
        <dbReference type="ChEBI" id="CHEBI:43474"/>
        <dbReference type="ChEBI" id="CHEBI:57834"/>
        <dbReference type="ChEBI" id="CHEBI:57835"/>
        <dbReference type="ChEBI" id="CHEBI:57925"/>
        <dbReference type="ChEBI" id="CHEBI:456216"/>
        <dbReference type="EC" id="6.3.1.8"/>
    </reaction>
</comment>
<comment type="catalytic activity">
    <reaction evidence="3 4 5 6">
        <text>glutathionylspermidine + H2O = spermidine + glutathione</text>
        <dbReference type="Rhea" id="RHEA:17173"/>
        <dbReference type="ChEBI" id="CHEBI:15377"/>
        <dbReference type="ChEBI" id="CHEBI:57834"/>
        <dbReference type="ChEBI" id="CHEBI:57835"/>
        <dbReference type="ChEBI" id="CHEBI:57925"/>
        <dbReference type="EC" id="3.5.1.78"/>
    </reaction>
</comment>
<comment type="activity regulation">
    <text evidence="3 6 7">When exposed to oxidative stress, Gsp amidase activity is transiently inhibited in vivo by oxidation of the catalytic Cys-59 thiol to sulfenic acid; this modification does not affect Gsp synthetase activity. Gsp amidase activity is negatively autoregulated by the Gsp synthetase domain, and is activated by the Gsp synthetase substrates, GSH and ATP-Mg(2+); the occupancy of the synthetase active site may initiate communication through the protein as manifest by the release of inhibition of the amidase activity. A tetrahedral phosphonate analog of glutathionylspermidine, designed as a mimic of the proposed tetrahedral intermediate for either reaction, inhibits the synthetase activity (Ki of 10 uM) but does not inhibit the amidase activity. Amidase activity is inhibited by iodoacetamide in vitro.</text>
</comment>
<comment type="biophysicochemical properties">
    <kinetics>
        <KM evidence="2 5">100 uM for ATP (at pH 6.8)</KM>
        <KM evidence="2 5">800 uM for glutathione (at pH 6.8)</KM>
        <KM evidence="2 5">218 uM for glutathione</KM>
        <KM evidence="2 5">60 uM for spermidine (at pH 6.8)</KM>
        <KM evidence="2 5">20 uM for spermidine (at pH 7.5)</KM>
        <KM evidence="2 5">76 uM for spermidine</KM>
        <KM evidence="2 5">900 uM for glutathionylspermidine (at pH 7.5)</KM>
        <text evidence="5">kcat is 7 sec(-1) for Gsp synthetase activity at pH 6.8 and 2.1 sec(-1) for Gsp amidase activity at pH 7.5.</text>
    </kinetics>
    <phDependence>
        <text evidence="5">Optimum pH is around 6.8 for Gsp synthetase activity.</text>
    </phDependence>
</comment>
<comment type="pathway">
    <text>Sulfur metabolism; glutathione metabolism.</text>
</comment>
<comment type="pathway">
    <text>Amine and polyamine metabolism; spermidine metabolism.</text>
</comment>
<comment type="subunit">
    <text evidence="2 5">Homodimer.</text>
</comment>
<comment type="interaction">
    <interactant intactId="EBI-557080">
        <id>P0AES0</id>
    </interactant>
    <interactant intactId="EBI-554030">
        <id>P31574</id>
        <label>fixB</label>
    </interactant>
    <organismsDiffer>false</organismsDiffer>
    <experiments>2</experiments>
</comment>
<comment type="interaction">
    <interactant intactId="EBI-557080">
        <id>P0AES0</id>
    </interactant>
    <interactant intactId="EBI-545468">
        <id>P0AG30</id>
        <label>rho</label>
    </interactant>
    <organismsDiffer>false</organismsDiffer>
    <experiments>5</experiments>
</comment>
<comment type="induction">
    <text>Expression level is unaffected by H(2)O(2); however Gsp rapidly accumulates in E.coli in the presence of H(2)O(2).</text>
</comment>
<comment type="domain">
    <text evidence="2 6">The two activities reside in distinct domains (N-terminal amidase and C-terminal synthetase). The two domains expressed independently are folded and functional; liberation of the amidase domain from the synthetase domain highly activates the amidase activity.</text>
</comment>
<comment type="PTM">
    <text evidence="3">Oxidation of Cys-59 to sulfenic acid during oxidative stress selectively inhibits the amidase activity which leads to a rapid increase in the amounts of intracellular Gsp and Gsp S-thiolated proteins (GspSSPs).</text>
</comment>
<comment type="disruption phenotype">
    <text evidence="3 4">Cells lacking this gene do not produce Gsp under anaerobic conditions. Cells lacking both this gene and glutaredoxin (grxA or grxB) become hypersensitive to H(2)O(2); they are even more susceptible to oxidative damage than the single mutant lacking glutaredoxin only.</text>
</comment>
<comment type="miscellaneous">
    <text evidence="10">Gsp forms mixed disulfides with the thiols of a variety of E.coli proteins. These mixed disulfides represent a previously uncharacterized type of post-translational modification. The level of these proteins is increased by oxidative stress, which implies that Gsp might protect protein thiols against irreversible oxidation (PubMed:20530482).</text>
</comment>
<comment type="miscellaneous">
    <text evidence="11">No metal ion is required for the amidase activity.</text>
</comment>
<comment type="miscellaneous">
    <text evidence="9 12">Gsp hydrolysis to GSH and spermidine proceeds with formation of a glutathionyl acyl-enzyme intermediate, utilizing a cysteine residue as the catalytic nucleophile (PubMed:9398217). For Gsp synthesis, GSH is likely phosphorylated at one of two GSH-binding sites to form an acylphosphate intermediate that then translocates to the other site for subsequent nucleophilic addition of spermidine (PubMed:17124497).</text>
</comment>
<comment type="similarity">
    <text evidence="8">In the C-terminal section; belongs to the glutathionylspermidine synthase preATP-grasp family.</text>
</comment>
<keyword id="KW-0002">3D-structure</keyword>
<keyword id="KW-0067">ATP-binding</keyword>
<keyword id="KW-0903">Direct protein sequencing</keyword>
<keyword id="KW-0378">Hydrolase</keyword>
<keyword id="KW-0436">Ligase</keyword>
<keyword id="KW-0460">Magnesium</keyword>
<keyword id="KW-0479">Metal-binding</keyword>
<keyword id="KW-0511">Multifunctional enzyme</keyword>
<keyword id="KW-0547">Nucleotide-binding</keyword>
<keyword id="KW-0558">Oxidation</keyword>
<keyword id="KW-1185">Reference proteome</keyword>
<organism>
    <name type="scientific">Escherichia coli (strain K12)</name>
    <dbReference type="NCBI Taxonomy" id="83333"/>
    <lineage>
        <taxon>Bacteria</taxon>
        <taxon>Pseudomonadati</taxon>
        <taxon>Pseudomonadota</taxon>
        <taxon>Gammaproteobacteria</taxon>
        <taxon>Enterobacterales</taxon>
        <taxon>Enterobacteriaceae</taxon>
        <taxon>Escherichia</taxon>
    </lineage>
</organism>
<gene>
    <name type="primary">gss</name>
    <name type="synonym">gsp</name>
    <name type="ordered locus">b2988</name>
    <name type="ordered locus">JW2956</name>
</gene>
<feature type="initiator methionine" description="Removed" evidence="5">
    <location>
        <position position="1"/>
    </location>
</feature>
<feature type="chain" id="PRO_0000070443" description="Bifunctional glutathionylspermidine synthetase/amidase">
    <location>
        <begin position="2"/>
        <end position="619"/>
    </location>
</feature>
<feature type="domain" description="Peptidase C51" evidence="1">
    <location>
        <begin position="34"/>
        <end position="176"/>
    </location>
</feature>
<feature type="region of interest" description="Gsp amidase">
    <location>
        <begin position="2"/>
        <end position="195"/>
    </location>
</feature>
<feature type="region of interest" description="Linker">
    <location>
        <begin position="196"/>
        <end position="205"/>
    </location>
</feature>
<feature type="region of interest" description="Gsp synthetase">
    <location>
        <begin position="206"/>
        <end position="619"/>
    </location>
</feature>
<feature type="active site" description="S-(gamma-glutamyl-cysteinyl-glycyl)-cysteine intermediate" evidence="7">
    <location>
        <position position="59"/>
    </location>
</feature>
<feature type="binding site">
    <location>
        <position position="58"/>
    </location>
    <ligand>
        <name>glutathionylspermidine</name>
        <dbReference type="ChEBI" id="CHEBI:57835"/>
    </ligand>
</feature>
<feature type="binding site">
    <location>
        <position position="64"/>
    </location>
    <ligand>
        <name>glutathionylspermidine</name>
        <dbReference type="ChEBI" id="CHEBI:57835"/>
    </ligand>
</feature>
<feature type="binding site">
    <location>
        <begin position="78"/>
        <end position="81"/>
    </location>
    <ligand>
        <name>glutathionylspermidine</name>
        <dbReference type="ChEBI" id="CHEBI:57835"/>
    </ligand>
</feature>
<feature type="binding site">
    <location>
        <position position="149"/>
    </location>
    <ligand>
        <name>glutathionylspermidine</name>
        <dbReference type="ChEBI" id="CHEBI:57835"/>
    </ligand>
</feature>
<feature type="binding site">
    <location>
        <begin position="316"/>
        <end position="318"/>
    </location>
    <ligand>
        <name>ATP</name>
        <dbReference type="ChEBI" id="CHEBI:30616"/>
    </ligand>
</feature>
<feature type="binding site">
    <location>
        <position position="316"/>
    </location>
    <ligand>
        <name>glutathione</name>
        <dbReference type="ChEBI" id="CHEBI:57925"/>
    </ligand>
</feature>
<feature type="binding site">
    <location>
        <position position="318"/>
    </location>
    <ligand>
        <name>Mg(2+)</name>
        <dbReference type="ChEBI" id="CHEBI:18420"/>
        <label>1</label>
    </ligand>
</feature>
<feature type="binding site">
    <location>
        <position position="330"/>
    </location>
    <ligand>
        <name>Mg(2+)</name>
        <dbReference type="ChEBI" id="CHEBI:18420"/>
        <label>1</label>
    </ligand>
</feature>
<feature type="binding site">
    <location>
        <position position="330"/>
    </location>
    <ligand>
        <name>Mg(2+)</name>
        <dbReference type="ChEBI" id="CHEBI:18420"/>
        <label>2</label>
    </ligand>
</feature>
<feature type="binding site">
    <location>
        <position position="332"/>
    </location>
    <ligand>
        <name>Mg(2+)</name>
        <dbReference type="ChEBI" id="CHEBI:18420"/>
        <label>2</label>
    </ligand>
</feature>
<feature type="binding site">
    <location>
        <position position="335"/>
    </location>
    <ligand>
        <name>glutathione</name>
        <dbReference type="ChEBI" id="CHEBI:57925"/>
    </ligand>
</feature>
<feature type="binding site">
    <location>
        <position position="391"/>
    </location>
    <ligand>
        <name>spermidine</name>
        <dbReference type="ChEBI" id="CHEBI:57834"/>
    </ligand>
</feature>
<feature type="binding site">
    <location>
        <position position="392"/>
    </location>
    <ligand>
        <name>glutathione</name>
        <dbReference type="ChEBI" id="CHEBI:57925"/>
    </ligand>
</feature>
<feature type="binding site">
    <location>
        <position position="446"/>
    </location>
    <ligand>
        <name>glutathione</name>
        <dbReference type="ChEBI" id="CHEBI:57925"/>
    </ligand>
</feature>
<feature type="binding site">
    <location>
        <position position="498"/>
    </location>
    <ligand>
        <name>ATP</name>
        <dbReference type="ChEBI" id="CHEBI:30616"/>
    </ligand>
</feature>
<feature type="binding site">
    <location>
        <position position="533"/>
    </location>
    <ligand>
        <name>ATP</name>
        <dbReference type="ChEBI" id="CHEBI:30616"/>
    </ligand>
</feature>
<feature type="binding site">
    <location>
        <begin position="539"/>
        <end position="540"/>
    </location>
    <ligand>
        <name>ATP</name>
        <dbReference type="ChEBI" id="CHEBI:30616"/>
    </ligand>
</feature>
<feature type="binding site">
    <location>
        <begin position="568"/>
        <end position="571"/>
    </location>
    <ligand>
        <name>ATP</name>
        <dbReference type="ChEBI" id="CHEBI:30616"/>
    </ligand>
</feature>
<feature type="binding site">
    <location>
        <position position="582"/>
    </location>
    <ligand>
        <name>ATP</name>
        <dbReference type="ChEBI" id="CHEBI:30616"/>
    </ligand>
</feature>
<feature type="binding site">
    <location>
        <begin position="603"/>
        <end position="605"/>
    </location>
    <ligand>
        <name>ATP</name>
        <dbReference type="ChEBI" id="CHEBI:30616"/>
    </ligand>
</feature>
<feature type="binding site">
    <location>
        <position position="610"/>
    </location>
    <ligand>
        <name>spermidine</name>
        <dbReference type="ChEBI" id="CHEBI:57834"/>
    </ligand>
</feature>
<feature type="site" description="Increases nucleophilicity of active site Cys; for amidase activity">
    <location>
        <position position="131"/>
    </location>
</feature>
<feature type="site" description="Transition state stabilizer; for synthetase activity">
    <location>
        <position position="316"/>
    </location>
</feature>
<feature type="modified residue" description="Cysteine sulfenic acid (-SOH); transient" evidence="3">
    <location>
        <position position="59"/>
    </location>
</feature>
<feature type="mutagenesis site" description="Loss of amidase activity." evidence="7">
    <original>C</original>
    <variation>A</variation>
    <location>
        <position position="59"/>
    </location>
</feature>
<feature type="mutagenesis site" description="No effect on amidase activity." evidence="7">
    <original>C</original>
    <variation>A</variation>
    <location>
        <position position="173"/>
    </location>
</feature>
<feature type="mutagenesis site" description="Loss of synthetase activity.">
    <original>R</original>
    <variation>E</variation>
    <location>
        <position position="316"/>
    </location>
</feature>
<feature type="mutagenesis site" description="3.6-fold decrease in GSH affinity, 1.6-fold decrease in spermidine activity, and 1.3-fold decrease in synthetase activity." evidence="2">
    <original>S</original>
    <variation>A</variation>
    <location>
        <position position="335"/>
    </location>
</feature>
<feature type="mutagenesis site" description="No effect on GSH and spermidine affinity, but 2-fold decrease in synthetase activity." evidence="2">
    <original>S</original>
    <variation>A</variation>
    <location>
        <position position="337"/>
    </location>
</feature>
<feature type="mutagenesis site" description="10-fold decrease in GSH affinity, 5-fold decrease in spermidine activity, but no effect on synthetase activity." evidence="2">
    <original>C</original>
    <variation>A</variation>
    <location>
        <position position="338"/>
    </location>
</feature>
<feature type="mutagenesis site" description="2-fold decrease in GSH affinity, 60-fold decrease in spermidine activity, and 10-fold decrease in synthetase activity." evidence="2">
    <original>E</original>
    <variation>A</variation>
    <location>
        <position position="391"/>
    </location>
</feature>
<feature type="mutagenesis site" description="33-fold decrease in GSH affinity, 13-fold decrease in spermidine activity, and 6-fold decrease in synthetase activity." evidence="2">
    <original>E</original>
    <variation>A</variation>
    <location>
        <position position="392"/>
    </location>
</feature>
<feature type="mutagenesis site" description="3-fold decrease in GSH affinity, 21-fold decrease in spermidine activity, and 17-fold decrease in synthetase activity." evidence="2">
    <original>T</original>
    <variation>A</variation>
    <location>
        <position position="441"/>
    </location>
</feature>
<feature type="mutagenesis site" description="6-fold decrease in GSH affinity, 2.4-fold decrease in spermidine activity, and 4-fold decrease in synthetase activity." evidence="2">
    <original>R</original>
    <variation>A</variation>
    <location>
        <position position="538"/>
    </location>
</feature>
<feature type="mutagenesis site" description="10-fold increase in GSH affinity, 9-fold decrease in spermidine activity, and 15-fold decrease in synthetase activity." evidence="2">
    <original>R</original>
    <variation>A</variation>
    <location>
        <position position="598"/>
    </location>
</feature>
<feature type="strand" evidence="16">
    <location>
        <begin position="15"/>
        <end position="19"/>
    </location>
</feature>
<feature type="turn" evidence="16">
    <location>
        <begin position="20"/>
        <end position="22"/>
    </location>
</feature>
<feature type="strand" evidence="16">
    <location>
        <begin position="23"/>
        <end position="26"/>
    </location>
</feature>
<feature type="helix" evidence="16">
    <location>
        <begin position="35"/>
        <end position="40"/>
    </location>
</feature>
<feature type="helix" evidence="16">
    <location>
        <begin position="42"/>
        <end position="44"/>
    </location>
</feature>
<feature type="strand" evidence="16">
    <location>
        <begin position="45"/>
        <end position="48"/>
    </location>
</feature>
<feature type="strand" evidence="16">
    <location>
        <begin position="51"/>
        <end position="55"/>
    </location>
</feature>
<feature type="helix" evidence="16">
    <location>
        <begin position="59"/>
        <end position="71"/>
    </location>
</feature>
<feature type="strand" evidence="16">
    <location>
        <begin position="72"/>
        <end position="74"/>
    </location>
</feature>
<feature type="helix" evidence="16">
    <location>
        <begin position="81"/>
        <end position="86"/>
    </location>
</feature>
<feature type="strand" evidence="16">
    <location>
        <begin position="89"/>
        <end position="92"/>
    </location>
</feature>
<feature type="turn" evidence="16">
    <location>
        <begin position="93"/>
        <end position="95"/>
    </location>
</feature>
<feature type="strand" evidence="16">
    <location>
        <begin position="98"/>
        <end position="100"/>
    </location>
</feature>
<feature type="strand" evidence="16">
    <location>
        <begin position="102"/>
        <end position="105"/>
    </location>
</feature>
<feature type="strand" evidence="15">
    <location>
        <begin position="108"/>
        <end position="110"/>
    </location>
</feature>
<feature type="strand" evidence="16">
    <location>
        <begin position="117"/>
        <end position="120"/>
    </location>
</feature>
<feature type="helix" evidence="16">
    <location>
        <begin position="124"/>
        <end position="126"/>
    </location>
</feature>
<feature type="turn" evidence="16">
    <location>
        <begin position="127"/>
        <end position="129"/>
    </location>
</feature>
<feature type="strand" evidence="16">
    <location>
        <begin position="131"/>
        <end position="138"/>
    </location>
</feature>
<feature type="strand" evidence="16">
    <location>
        <begin position="140"/>
        <end position="146"/>
    </location>
</feature>
<feature type="strand" evidence="16">
    <location>
        <begin position="148"/>
        <end position="150"/>
    </location>
</feature>
<feature type="strand" evidence="16">
    <location>
        <begin position="162"/>
        <end position="170"/>
    </location>
</feature>
<feature type="strand" evidence="16">
    <location>
        <begin position="173"/>
        <end position="177"/>
    </location>
</feature>
<feature type="strand" evidence="16">
    <location>
        <begin position="179"/>
        <end position="182"/>
    </location>
</feature>
<feature type="strand" evidence="16">
    <location>
        <begin position="185"/>
        <end position="192"/>
    </location>
</feature>
<feature type="helix" evidence="13">
    <location>
        <begin position="206"/>
        <end position="209"/>
    </location>
</feature>
<feature type="strand" evidence="13">
    <location>
        <begin position="212"/>
        <end position="215"/>
    </location>
</feature>
<feature type="strand" evidence="14">
    <location>
        <begin position="229"/>
        <end position="231"/>
    </location>
</feature>
<feature type="helix" evidence="13">
    <location>
        <begin position="232"/>
        <end position="241"/>
    </location>
</feature>
<feature type="strand" evidence="13">
    <location>
        <begin position="245"/>
        <end position="247"/>
    </location>
</feature>
<feature type="strand" evidence="13">
    <location>
        <begin position="251"/>
        <end position="256"/>
    </location>
</feature>
<feature type="helix" evidence="13">
    <location>
        <begin position="257"/>
        <end position="283"/>
    </location>
</feature>
<feature type="helix" evidence="13">
    <location>
        <begin position="285"/>
        <end position="288"/>
    </location>
</feature>
<feature type="helix" evidence="13">
    <location>
        <begin position="289"/>
        <end position="291"/>
    </location>
</feature>
<feature type="helix" evidence="13">
    <location>
        <begin position="295"/>
        <end position="297"/>
    </location>
</feature>
<feature type="helix" evidence="13">
    <location>
        <begin position="298"/>
        <end position="307"/>
    </location>
</feature>
<feature type="helix" evidence="15">
    <location>
        <begin position="309"/>
        <end position="311"/>
    </location>
</feature>
<feature type="strand" evidence="13">
    <location>
        <begin position="314"/>
        <end position="322"/>
    </location>
</feature>
<feature type="strand" evidence="13">
    <location>
        <begin position="325"/>
        <end position="332"/>
    </location>
</feature>
<feature type="helix" evidence="13">
    <location>
        <begin position="339"/>
        <end position="343"/>
    </location>
</feature>
<feature type="helix" evidence="13">
    <location>
        <begin position="345"/>
        <end position="353"/>
    </location>
</feature>
<feature type="turn" evidence="13">
    <location>
        <begin position="361"/>
        <end position="364"/>
    </location>
</feature>
<feature type="helix" evidence="13">
    <location>
        <begin position="365"/>
        <end position="374"/>
    </location>
</feature>
<feature type="strand" evidence="13">
    <location>
        <begin position="380"/>
        <end position="386"/>
    </location>
</feature>
<feature type="helix" evidence="13">
    <location>
        <begin position="390"/>
        <end position="405"/>
    </location>
</feature>
<feature type="strand" evidence="13">
    <location>
        <begin position="409"/>
        <end position="416"/>
    </location>
</feature>
<feature type="strand" evidence="13">
    <location>
        <begin position="423"/>
        <end position="425"/>
    </location>
</feature>
<feature type="strand" evidence="13">
    <location>
        <begin position="437"/>
        <end position="442"/>
    </location>
</feature>
<feature type="helix" evidence="13">
    <location>
        <begin position="444"/>
        <end position="453"/>
    </location>
</feature>
<feature type="turn" evidence="15">
    <location>
        <begin position="456"/>
        <end position="458"/>
    </location>
</feature>
<feature type="strand" evidence="15">
    <location>
        <begin position="459"/>
        <end position="461"/>
    </location>
</feature>
<feature type="helix" evidence="13">
    <location>
        <begin position="475"/>
        <end position="479"/>
    </location>
</feature>
<feature type="strand" evidence="13">
    <location>
        <begin position="485"/>
        <end position="488"/>
    </location>
</feature>
<feature type="helix" evidence="13">
    <location>
        <begin position="490"/>
        <end position="493"/>
    </location>
</feature>
<feature type="turn" evidence="13">
    <location>
        <begin position="494"/>
        <end position="496"/>
    </location>
</feature>
<feature type="helix" evidence="13">
    <location>
        <begin position="500"/>
        <end position="507"/>
    </location>
</feature>
<feature type="strand" evidence="13">
    <location>
        <begin position="517"/>
        <end position="520"/>
    </location>
</feature>
<feature type="helix" evidence="13">
    <location>
        <begin position="523"/>
        <end position="528"/>
    </location>
</feature>
<feature type="strand" evidence="13">
    <location>
        <begin position="530"/>
        <end position="534"/>
    </location>
</feature>
<feature type="turn" evidence="13">
    <location>
        <begin position="539"/>
        <end position="542"/>
    </location>
</feature>
<feature type="strand" evidence="13">
    <location>
        <begin position="544"/>
        <end position="546"/>
    </location>
</feature>
<feature type="strand" evidence="13">
    <location>
        <begin position="552"/>
        <end position="555"/>
    </location>
</feature>
<feature type="turn" evidence="13">
    <location>
        <begin position="559"/>
        <end position="562"/>
    </location>
</feature>
<feature type="strand" evidence="13">
    <location>
        <begin position="565"/>
        <end position="569"/>
    </location>
</feature>
<feature type="strand" evidence="13">
    <location>
        <begin position="579"/>
        <end position="588"/>
    </location>
</feature>
<feature type="strand" evidence="13">
    <location>
        <begin position="591"/>
        <end position="604"/>
    </location>
</feature>
<feature type="strand" evidence="13">
    <location>
        <begin position="609"/>
        <end position="612"/>
    </location>
</feature>
<feature type="strand" evidence="13">
    <location>
        <begin position="614"/>
        <end position="617"/>
    </location>
</feature>
<evidence type="ECO:0000255" key="1">
    <source>
        <dbReference type="PROSITE-ProRule" id="PRU00048"/>
    </source>
</evidence>
<evidence type="ECO:0000269" key="2">
    <source>
    </source>
</evidence>
<evidence type="ECO:0000269" key="3">
    <source>
    </source>
</evidence>
<evidence type="ECO:0000269" key="4">
    <source>
    </source>
</evidence>
<evidence type="ECO:0000269" key="5">
    <source>
    </source>
</evidence>
<evidence type="ECO:0000269" key="6">
    <source>
    </source>
</evidence>
<evidence type="ECO:0000269" key="7">
    <source>
    </source>
</evidence>
<evidence type="ECO:0000305" key="8"/>
<evidence type="ECO:0000305" key="9">
    <source>
    </source>
</evidence>
<evidence type="ECO:0000305" key="10">
    <source>
    </source>
</evidence>
<evidence type="ECO:0000305" key="11">
    <source>
    </source>
</evidence>
<evidence type="ECO:0000305" key="12">
    <source>
    </source>
</evidence>
<evidence type="ECO:0007829" key="13">
    <source>
        <dbReference type="PDB" id="2IO8"/>
    </source>
</evidence>
<evidence type="ECO:0007829" key="14">
    <source>
        <dbReference type="PDB" id="2IOA"/>
    </source>
</evidence>
<evidence type="ECO:0007829" key="15">
    <source>
        <dbReference type="PDB" id="2IOB"/>
    </source>
</evidence>
<evidence type="ECO:0007829" key="16">
    <source>
        <dbReference type="PDB" id="3A2Z"/>
    </source>
</evidence>